<feature type="chain" id="PRO_1000127702" description="Glucokinase">
    <location>
        <begin position="1"/>
        <end position="321"/>
    </location>
</feature>
<feature type="binding site" evidence="1">
    <location>
        <begin position="8"/>
        <end position="13"/>
    </location>
    <ligand>
        <name>ATP</name>
        <dbReference type="ChEBI" id="CHEBI:30616"/>
    </ligand>
</feature>
<accession>B7M6Q8</accession>
<comment type="catalytic activity">
    <reaction evidence="1">
        <text>D-glucose + ATP = D-glucose 6-phosphate + ADP + H(+)</text>
        <dbReference type="Rhea" id="RHEA:17825"/>
        <dbReference type="ChEBI" id="CHEBI:4167"/>
        <dbReference type="ChEBI" id="CHEBI:15378"/>
        <dbReference type="ChEBI" id="CHEBI:30616"/>
        <dbReference type="ChEBI" id="CHEBI:61548"/>
        <dbReference type="ChEBI" id="CHEBI:456216"/>
        <dbReference type="EC" id="2.7.1.2"/>
    </reaction>
</comment>
<comment type="subcellular location">
    <subcellularLocation>
        <location evidence="1">Cytoplasm</location>
    </subcellularLocation>
</comment>
<comment type="similarity">
    <text evidence="1">Belongs to the bacterial glucokinase family.</text>
</comment>
<gene>
    <name evidence="1" type="primary">glk</name>
    <name type="ordered locus">ECIAI1_2454</name>
</gene>
<dbReference type="EC" id="2.7.1.2" evidence="1"/>
<dbReference type="EMBL" id="CU928160">
    <property type="protein sequence ID" value="CAQ99296.1"/>
    <property type="molecule type" value="Genomic_DNA"/>
</dbReference>
<dbReference type="RefSeq" id="WP_000170346.1">
    <property type="nucleotide sequence ID" value="NC_011741.1"/>
</dbReference>
<dbReference type="SMR" id="B7M6Q8"/>
<dbReference type="GeneID" id="75202543"/>
<dbReference type="KEGG" id="ecr:ECIAI1_2454"/>
<dbReference type="HOGENOM" id="CLU_042582_1_0_6"/>
<dbReference type="GO" id="GO:0005829">
    <property type="term" value="C:cytosol"/>
    <property type="evidence" value="ECO:0007669"/>
    <property type="project" value="TreeGrafter"/>
</dbReference>
<dbReference type="GO" id="GO:0005524">
    <property type="term" value="F:ATP binding"/>
    <property type="evidence" value="ECO:0007669"/>
    <property type="project" value="UniProtKB-UniRule"/>
</dbReference>
<dbReference type="GO" id="GO:0005536">
    <property type="term" value="F:D-glucose binding"/>
    <property type="evidence" value="ECO:0007669"/>
    <property type="project" value="InterPro"/>
</dbReference>
<dbReference type="GO" id="GO:0004340">
    <property type="term" value="F:glucokinase activity"/>
    <property type="evidence" value="ECO:0007669"/>
    <property type="project" value="UniProtKB-UniRule"/>
</dbReference>
<dbReference type="GO" id="GO:0006096">
    <property type="term" value="P:glycolytic process"/>
    <property type="evidence" value="ECO:0007669"/>
    <property type="project" value="UniProtKB-UniRule"/>
</dbReference>
<dbReference type="CDD" id="cd24008">
    <property type="entry name" value="ASKHA_NBD_GLK"/>
    <property type="match status" value="1"/>
</dbReference>
<dbReference type="FunFam" id="3.30.420.40:FF:000045">
    <property type="entry name" value="Glucokinase"/>
    <property type="match status" value="1"/>
</dbReference>
<dbReference type="FunFam" id="3.40.367.20:FF:000002">
    <property type="entry name" value="Glucokinase"/>
    <property type="match status" value="1"/>
</dbReference>
<dbReference type="Gene3D" id="3.30.420.40">
    <property type="match status" value="1"/>
</dbReference>
<dbReference type="Gene3D" id="3.40.367.20">
    <property type="match status" value="1"/>
</dbReference>
<dbReference type="HAMAP" id="MF_00524">
    <property type="entry name" value="Glucokinase"/>
    <property type="match status" value="1"/>
</dbReference>
<dbReference type="InterPro" id="IPR043129">
    <property type="entry name" value="ATPase_NBD"/>
</dbReference>
<dbReference type="InterPro" id="IPR050201">
    <property type="entry name" value="Bacterial_glucokinase"/>
</dbReference>
<dbReference type="InterPro" id="IPR003836">
    <property type="entry name" value="Glucokinase"/>
</dbReference>
<dbReference type="NCBIfam" id="TIGR00749">
    <property type="entry name" value="glk"/>
    <property type="match status" value="1"/>
</dbReference>
<dbReference type="NCBIfam" id="NF001414">
    <property type="entry name" value="PRK00292.1-1"/>
    <property type="match status" value="1"/>
</dbReference>
<dbReference type="NCBIfam" id="NF001416">
    <property type="entry name" value="PRK00292.1-3"/>
    <property type="match status" value="1"/>
</dbReference>
<dbReference type="PANTHER" id="PTHR47690">
    <property type="entry name" value="GLUCOKINASE"/>
    <property type="match status" value="1"/>
</dbReference>
<dbReference type="PANTHER" id="PTHR47690:SF1">
    <property type="entry name" value="GLUCOKINASE"/>
    <property type="match status" value="1"/>
</dbReference>
<dbReference type="Pfam" id="PF02685">
    <property type="entry name" value="Glucokinase"/>
    <property type="match status" value="1"/>
</dbReference>
<dbReference type="SUPFAM" id="SSF53067">
    <property type="entry name" value="Actin-like ATPase domain"/>
    <property type="match status" value="1"/>
</dbReference>
<reference key="1">
    <citation type="journal article" date="2009" name="PLoS Genet.">
        <title>Organised genome dynamics in the Escherichia coli species results in highly diverse adaptive paths.</title>
        <authorList>
            <person name="Touchon M."/>
            <person name="Hoede C."/>
            <person name="Tenaillon O."/>
            <person name="Barbe V."/>
            <person name="Baeriswyl S."/>
            <person name="Bidet P."/>
            <person name="Bingen E."/>
            <person name="Bonacorsi S."/>
            <person name="Bouchier C."/>
            <person name="Bouvet O."/>
            <person name="Calteau A."/>
            <person name="Chiapello H."/>
            <person name="Clermont O."/>
            <person name="Cruveiller S."/>
            <person name="Danchin A."/>
            <person name="Diard M."/>
            <person name="Dossat C."/>
            <person name="Karoui M.E."/>
            <person name="Frapy E."/>
            <person name="Garry L."/>
            <person name="Ghigo J.M."/>
            <person name="Gilles A.M."/>
            <person name="Johnson J."/>
            <person name="Le Bouguenec C."/>
            <person name="Lescat M."/>
            <person name="Mangenot S."/>
            <person name="Martinez-Jehanne V."/>
            <person name="Matic I."/>
            <person name="Nassif X."/>
            <person name="Oztas S."/>
            <person name="Petit M.A."/>
            <person name="Pichon C."/>
            <person name="Rouy Z."/>
            <person name="Ruf C.S."/>
            <person name="Schneider D."/>
            <person name="Tourret J."/>
            <person name="Vacherie B."/>
            <person name="Vallenet D."/>
            <person name="Medigue C."/>
            <person name="Rocha E.P.C."/>
            <person name="Denamur E."/>
        </authorList>
    </citation>
    <scope>NUCLEOTIDE SEQUENCE [LARGE SCALE GENOMIC DNA]</scope>
    <source>
        <strain>IAI1</strain>
    </source>
</reference>
<keyword id="KW-0067">ATP-binding</keyword>
<keyword id="KW-0963">Cytoplasm</keyword>
<keyword id="KW-0324">Glycolysis</keyword>
<keyword id="KW-0418">Kinase</keyword>
<keyword id="KW-0547">Nucleotide-binding</keyword>
<keyword id="KW-0808">Transferase</keyword>
<evidence type="ECO:0000255" key="1">
    <source>
        <dbReference type="HAMAP-Rule" id="MF_00524"/>
    </source>
</evidence>
<proteinExistence type="inferred from homology"/>
<protein>
    <recommendedName>
        <fullName evidence="1">Glucokinase</fullName>
        <ecNumber evidence="1">2.7.1.2</ecNumber>
    </recommendedName>
    <alternativeName>
        <fullName evidence="1">Glucose kinase</fullName>
    </alternativeName>
</protein>
<name>GLK_ECO8A</name>
<organism>
    <name type="scientific">Escherichia coli O8 (strain IAI1)</name>
    <dbReference type="NCBI Taxonomy" id="585034"/>
    <lineage>
        <taxon>Bacteria</taxon>
        <taxon>Pseudomonadati</taxon>
        <taxon>Pseudomonadota</taxon>
        <taxon>Gammaproteobacteria</taxon>
        <taxon>Enterobacterales</taxon>
        <taxon>Enterobacteriaceae</taxon>
        <taxon>Escherichia</taxon>
    </lineage>
</organism>
<sequence length="321" mass="34723">MTKYALVGDVGGTNARLALCDIASGEISQAKTYSGLDYPSLEAVIRVYLEEHKVEVKDGCIAIACPITGDWVAMTNHTWAFSIAEMKKNLGFSHLEIINDFTAVSMAIPMLKKEHLIQFGGAEPVEGKPIAVYGAGTGLGVAHLVHVDKRWVSLPGEGGHVDFAPNSEEEAIILEILRAEIGHVSAERVLSGPGLVNLYRAIVKADNRLPENLKPKDITERALADSCTDCRRALSLFCVIMGRFGGNLALNLGTFGGVFIAGGIVPRFLEFFKASGFRAAFEDKGRFKEYVHDIPVYLIVHDNPGLLGSGAHLRQTLGHIL</sequence>